<protein>
    <recommendedName>
        <fullName>Uncharacterized protein VP7</fullName>
    </recommendedName>
</protein>
<evidence type="ECO:0000256" key="1">
    <source>
        <dbReference type="SAM" id="MobiDB-lite"/>
    </source>
</evidence>
<proteinExistence type="predicted"/>
<dbReference type="EMBL" id="AF139763">
    <property type="protein sequence ID" value="AAG00072.1"/>
    <property type="molecule type" value="Genomic_RNA"/>
</dbReference>
<dbReference type="RefSeq" id="NP_690897.1">
    <property type="nucleotide sequence ID" value="NC_004187.1"/>
</dbReference>
<dbReference type="GeneID" id="993315"/>
<dbReference type="KEGG" id="vg:993315"/>
<dbReference type="Proteomes" id="UP000001675">
    <property type="component" value="Genome"/>
</dbReference>
<organism>
    <name type="scientific">Colorado tick fever virus (strain USA/Florio N-7180)</name>
    <name type="common">CTFV</name>
    <dbReference type="NCBI Taxonomy" id="648168"/>
    <lineage>
        <taxon>Viruses</taxon>
        <taxon>Riboviria</taxon>
        <taxon>Orthornavirae</taxon>
        <taxon>Duplornaviricota</taxon>
        <taxon>Resentoviricetes</taxon>
        <taxon>Reovirales</taxon>
        <taxon>Spinareoviridae</taxon>
        <taxon>Coltivirus</taxon>
        <taxon>Colorado tick fever coltivirus</taxon>
    </lineage>
</organism>
<feature type="chain" id="PRO_0000403195" description="Uncharacterized protein VP7">
    <location>
        <begin position="1"/>
        <end position="684"/>
    </location>
</feature>
<feature type="region of interest" description="Disordered" evidence="1">
    <location>
        <begin position="267"/>
        <end position="353"/>
    </location>
</feature>
<feature type="region of interest" description="Disordered" evidence="1">
    <location>
        <begin position="388"/>
        <end position="449"/>
    </location>
</feature>
<feature type="compositionally biased region" description="Polar residues" evidence="1">
    <location>
        <begin position="316"/>
        <end position="326"/>
    </location>
</feature>
<feature type="compositionally biased region" description="Basic and acidic residues" evidence="1">
    <location>
        <begin position="438"/>
        <end position="449"/>
    </location>
</feature>
<name>VP7_CTFVL</name>
<accession>Q9ENK9</accession>
<organismHost>
    <name type="scientific">Callospermophilus lateralis</name>
    <name type="common">Golden-mantled ground squirrel</name>
    <name type="synonym">Spermophilus lateralis</name>
    <dbReference type="NCBI Taxonomy" id="76772"/>
</organismHost>
<organismHost>
    <name type="scientific">Dermacentor andersoni</name>
    <name type="common">Rocky mountain wood tick</name>
    <dbReference type="NCBI Taxonomy" id="34620"/>
</organismHost>
<organismHost>
    <name type="scientific">Erethizon dorsatum</name>
    <name type="common">North American porcupine</name>
    <name type="synonym">Hystrix dorsata</name>
    <dbReference type="NCBI Taxonomy" id="34844"/>
</organismHost>
<organismHost>
    <name type="scientific">Homo sapiens</name>
    <name type="common">Human</name>
    <dbReference type="NCBI Taxonomy" id="9606"/>
</organismHost>
<organismHost>
    <name type="scientific">Neotoma cinerea</name>
    <name type="common">Bushy-tailed woodrat</name>
    <name type="synonym">Mus cinereus</name>
    <dbReference type="NCBI Taxonomy" id="105147"/>
</organismHost>
<organismHost>
    <name type="scientific">Peromyscus maniculatus</name>
    <name type="common">North American deer mouse</name>
    <dbReference type="NCBI Taxonomy" id="10042"/>
</organismHost>
<sequence length="684" mass="76236">MAARLPIDAFGMSVIQQNGLKVYTILPTSNLSNLSDQISQNKLYAVSERHVRELDQRDKGKVKKIKFIVTSKSVDYENWFGPDTDTEIIQYLEEGGLYHALYNACKEQKSTPSFVASPSNPAPVSLKQKEILSNWKLGTIVEFCQAVGLNRTPEEPWRQLARSYGLIFISEVGALASTHVASLDADLAKFEQREQRWMKMVDYKESFAHLGTDFNRYAFCPLIPPPCPEDSEEAILIHGSWVRSEEHDGGLFVLFKRVTIMDRHQVMGARAPSEDEEESSDPTEGSMDEVTHQTETLSLDSIPPPDFSRAPVIVTGMTSAKASTSYSRDEPPEDEGNRASARPKSSPCDTCTDDSSLLQSLLSTDWVTSVSTPLHGPTLPIDAAKDLSVASESEDEVSMSQSDAPPETAMDVSANHKPNTDSAHCAPSPLPQRARKIRPTEARRRAEREKRKLKPYYRSMEECFVPACDIESYRTSVIVQPLPQNVLPFPGTQLTRETVLRKALVRECERVAPSQAPDPEELLDSDTVKICEGRAKVMYESIPSHLRGVEIESVAPESNEVSVIYPRPQISMPDNFSLGNEEERIRTYVRKRTIMERESGGYAMLRPGYGAEALEHARYVSAAGVPIPELRGQVLRSRASREMMSQTDLRLLELMMPVVNVPPEGVDKDLLAVYKATVMDILTG</sequence>
<reference key="1">
    <citation type="journal article" date="2000" name="Biochem. Biophys. Res. Commun.">
        <title>Sequence determination and analysis of the full-length genome of colorado tick fever virus, the type species of genus Coltivirus (Family Reoviridae).</title>
        <authorList>
            <person name="Attoui H."/>
            <person name="Billoir F."/>
            <person name="Biagini P."/>
            <person name="Cantaloube J.F."/>
            <person name="de Chesse R."/>
            <person name="de Micco P."/>
            <person name="de Lamballerie X."/>
        </authorList>
    </citation>
    <scope>NUCLEOTIDE SEQUENCE [GENOMIC RNA]</scope>
</reference>
<keyword id="KW-1185">Reference proteome</keyword>